<name>YOAA_ECOLI</name>
<proteinExistence type="evidence at protein level"/>
<organism>
    <name type="scientific">Escherichia coli (strain K12)</name>
    <dbReference type="NCBI Taxonomy" id="83333"/>
    <lineage>
        <taxon>Bacteria</taxon>
        <taxon>Pseudomonadati</taxon>
        <taxon>Pseudomonadota</taxon>
        <taxon>Gammaproteobacteria</taxon>
        <taxon>Enterobacterales</taxon>
        <taxon>Enterobacteriaceae</taxon>
        <taxon>Escherichia</taxon>
    </lineage>
</organism>
<sequence>MTDDFAPDGQLAKAIPGFKPREPQRQMAVAVTQAIEKGQPLVVEAGTGTGKTYAYLAPALRAKKKVIISTGSKALQDQLYSRDLPTVSKALKYTGNVALLKGRSNYLCLERLEQQALAGGDLPVQILSDVILLRSWSNQTVDGDISTCVSVAEDSQAWPLVTSTNDNCLGSDCPMYKDCFVVKARKKAMDADVVVVNHHLFLADMVVKESGFGELIPEADVMIFDEAHQLPDIASQYFGQSLSSRQLLDLAKDITIAYRTELKDTQQLQKCADRLAQSAQDFRLQLGEPGYRGNLRELLANPQIQRAFLLLDDTLELCYDVAKLSLGRSALLDAAFERATLYRTRLKRLKEINQPGYSYWYECTSRHFTLALTPLSVADKFKELMAQKPGSWIFTSATLSVNDDLHHFTSRLGIEQAESLLLPSPFDYSRQALLCVLRNLPQTNQPGSARQLAAMLRPIIEANNGRCFMLCTSHAMMRDLAEQFRATMTLPVLLQGETSKGQLLQQFVSAGNALLVATSSFWEGVDVRGDTLSLVIIDKLPFTSPDDPLLKARMEDCRLRGGDPFDEVQLPDAVITLKQGVGRLIRDADDRGVLVICDNRLVMRPYGATFLASLPPAPRTRDIARAVRFLAIPSSR</sequence>
<protein>
    <recommendedName>
        <fullName evidence="7">ATP-dependent DNA helicase YoaA</fullName>
        <ecNumber evidence="6">5.6.2.3</ecNumber>
    </recommendedName>
    <alternativeName>
        <fullName evidence="8">DNA 5'-3' helicase YoaA</fullName>
    </alternativeName>
</protein>
<comment type="function">
    <text evidence="1 3 4 5 6">DNA-dependent ATPase and 5'-3' DNA helicase (PubMed:36509145). Has single-stranded (ss)DNA-dependent ATPase activity and 5'-3' helicase activity on forked DNA; both activities were measure in a YoaA:HolC (chi) complex (PubMed:36509145). Requires a 20-35 nucleotide (nt) 5'-ssDNA tail; dsDNA with a 20 nt gap is also unwound (PubMed:36509145). Unwinds damaged 3' nascent ends (such as those terminated by 3' azidothymidine (AZT), 3' dideoxy-C or an abasic site on the translocating strand), to promote repair and AZT excision (PubMed:36509145). Without HolC the protein has much lower activity which could be due to YoaA instability or helicase stimulation by HolC (PubMed:36509145). Genetically identified as involved in the repair of replication forks and tolerance of the chain-terminating nucleoside analog AZT (PubMed:26544712, PubMed:33582602, PubMed:34181484). May act in proofreading during nucleotide misincorporation, it appears to aid in the removal of potential A-to-T transversion mutations in ndk mutants (Probable) (PubMed:34181484).</text>
</comment>
<comment type="catalytic activity">
    <reaction evidence="6">
        <text>Couples ATP hydrolysis with the unwinding of duplex DNA at the replication fork by translocating in the 5'-3' direction. This creates two antiparallel DNA single strands (ssDNA). The leading ssDNA polymer is the template for DNA polymerase III holoenzyme which synthesizes a continuous strand.</text>
        <dbReference type="EC" id="5.6.2.3"/>
    </reaction>
</comment>
<comment type="catalytic activity">
    <reaction evidence="6">
        <text>ATP + H2O = ADP + phosphate + H(+)</text>
        <dbReference type="Rhea" id="RHEA:13065"/>
        <dbReference type="ChEBI" id="CHEBI:15377"/>
        <dbReference type="ChEBI" id="CHEBI:15378"/>
        <dbReference type="ChEBI" id="CHEBI:30616"/>
        <dbReference type="ChEBI" id="CHEBI:43474"/>
        <dbReference type="ChEBI" id="CHEBI:456216"/>
        <dbReference type="EC" id="5.6.2.3"/>
    </reaction>
</comment>
<comment type="cofactor">
    <cofactor evidence="9">
        <name>[4Fe-4S] cluster</name>
        <dbReference type="ChEBI" id="CHEBI:49883"/>
    </cofactor>
    <text evidence="9">Binds 1 [4Fe-4S] cluster.</text>
</comment>
<comment type="cofactor">
    <cofactor evidence="6">
        <name>Mg(2+)</name>
        <dbReference type="ChEBI" id="CHEBI:18420"/>
    </cofactor>
</comment>
<comment type="activity regulation">
    <text evidence="6">Non-hydrolyzable ATP analogs ATP-gamma-S and adenylyl-imidodiphosphate (AMP-PNP) inhibit helicase activity (PubMed:36509145).</text>
</comment>
<comment type="subunit">
    <text evidence="3 4 5 6">Interacts with the DNA polymerase III subunit Chi (holC), probably as a 1:1 complex (PubMed:26544712, PubMed:33582602, PubMed:34181484, PubMed:36509145).</text>
</comment>
<comment type="induction">
    <text evidence="5">Transcription is induced by AZT and repressed by LexA; has an immediate rise after AZT treatment and a slower response that peaks in the late log phase of growth (PubMed:34181484). The late response is not entirely under control of lexA (PubMed:34181484).</text>
</comment>
<comment type="disruption phenotype">
    <text evidence="3 5">Knockout mutants are sensitive to AZT (PubMed:26544712, PubMed:34181484). Has no effect on DNA recombination (PubMed:34181484).</text>
</comment>
<comment type="similarity">
    <text evidence="8">Belongs to the helicase family. DinG subfamily.</text>
</comment>
<keyword id="KW-0067">ATP-binding</keyword>
<keyword id="KW-0227">DNA damage</keyword>
<keyword id="KW-0234">DNA repair</keyword>
<keyword id="KW-0238">DNA-binding</keyword>
<keyword id="KW-0347">Helicase</keyword>
<keyword id="KW-0378">Hydrolase</keyword>
<keyword id="KW-0408">Iron</keyword>
<keyword id="KW-0411">Iron-sulfur</keyword>
<keyword id="KW-0413">Isomerase</keyword>
<keyword id="KW-0479">Metal-binding</keyword>
<keyword id="KW-0547">Nucleotide-binding</keyword>
<keyword id="KW-1185">Reference proteome</keyword>
<keyword id="KW-0742">SOS response</keyword>
<feature type="chain" id="PRO_0000102006" description="ATP-dependent DNA helicase YoaA">
    <location>
        <begin position="1"/>
        <end position="636"/>
    </location>
</feature>
<feature type="domain" description="Helicase ATP-binding" evidence="2">
    <location>
        <begin position="10"/>
        <end position="272"/>
    </location>
</feature>
<feature type="short sequence motif" description="DEAH box" evidence="2">
    <location>
        <begin position="225"/>
        <end position="228"/>
    </location>
</feature>
<feature type="binding site" evidence="2">
    <location>
        <begin position="45"/>
        <end position="52"/>
    </location>
    <ligand>
        <name>ATP</name>
        <dbReference type="ChEBI" id="CHEBI:30616"/>
    </ligand>
</feature>
<feature type="binding site" evidence="1">
    <location>
        <position position="108"/>
    </location>
    <ligand>
        <name>[4Fe-4S] cluster</name>
        <dbReference type="ChEBI" id="CHEBI:49883"/>
    </ligand>
</feature>
<feature type="binding site" evidence="1">
    <location>
        <position position="168"/>
    </location>
    <ligand>
        <name>[4Fe-4S] cluster</name>
        <dbReference type="ChEBI" id="CHEBI:49883"/>
    </ligand>
</feature>
<feature type="binding site" evidence="1">
    <location>
        <position position="173"/>
    </location>
    <ligand>
        <name>[4Fe-4S] cluster</name>
        <dbReference type="ChEBI" id="CHEBI:49883"/>
    </ligand>
</feature>
<feature type="binding site" evidence="1">
    <location>
        <position position="179"/>
    </location>
    <ligand>
        <name>[4Fe-4S] cluster</name>
        <dbReference type="ChEBI" id="CHEBI:49883"/>
    </ligand>
</feature>
<feature type="mutagenesis site" description="Cannot complement the AZT sensitivity of the knockout mutant, decreased colony size in presence of AZT, not toxic upon overexpression. Loss of ATPase and 5'-3' helicase activity." evidence="3 5 6">
    <original>K</original>
    <variation>A</variation>
    <location>
        <position position="51"/>
    </location>
</feature>
<feature type="mutagenesis site" description="Cannot complement the AZT sensitivity of the knockout mutant, decreased colony size in presence of AZT." evidence="3">
    <original>C</original>
    <variation>A</variation>
    <location>
        <position position="168"/>
    </location>
</feature>
<feature type="mutagenesis site" description="Cannot complement the AZT sensitivity of the knockout mutant, decreased colony size in presence of AZT." evidence="3">
    <original>D</original>
    <variation>A</variation>
    <location>
        <position position="225"/>
    </location>
</feature>
<feature type="mutagenesis site" description="Partially complements the AZT sensitivity of the knockout mutant." evidence="5">
    <original>P</original>
    <variation>A</variation>
    <location>
        <position position="615"/>
    </location>
</feature>
<feature type="mutagenesis site" description="Cannot complement the AZT sensitivity of the knockout mutant, no longer interacts with HolC, not toxic upon overexpression." evidence="5">
    <location>
        <begin position="619"/>
        <end position="636"/>
    </location>
</feature>
<feature type="mutagenesis site" description="Cannot complement the AZT sensitivity of the knockout mutant, no longer interacts with HolC." evidence="5">
    <original>R</original>
    <variation>A</variation>
    <location>
        <position position="619"/>
    </location>
</feature>
<feature type="mutagenesis site" description="Cannot complement the AZT sensitivity of the knockout mutant, no longer interacts with HolC." evidence="5">
    <original>T</original>
    <variation>A</variation>
    <location>
        <position position="620"/>
    </location>
</feature>
<feature type="mutagenesis site" description="Partially complements the AZT sensitivity of the knockout mutant." evidence="5">
    <original>T</original>
    <variation>I</variation>
    <location>
        <position position="620"/>
    </location>
</feature>
<feature type="mutagenesis site" description="Partially complements the AZT sensitivity of the knockout mutant." evidence="5">
    <original>F</original>
    <variation>A</variation>
    <location>
        <position position="629"/>
    </location>
</feature>
<feature type="mutagenesis site" description="Complements the AZT sensitivity of the knockout mutant." evidence="5">
    <location>
        <begin position="632"/>
        <end position="636"/>
    </location>
</feature>
<dbReference type="EC" id="5.6.2.3" evidence="6"/>
<dbReference type="EMBL" id="U00096">
    <property type="protein sequence ID" value="AAC74878.1"/>
    <property type="molecule type" value="Genomic_DNA"/>
</dbReference>
<dbReference type="EMBL" id="AP009048">
    <property type="protein sequence ID" value="BAA15617.1"/>
    <property type="molecule type" value="Genomic_DNA"/>
</dbReference>
<dbReference type="PIR" id="H64941">
    <property type="entry name" value="H64941"/>
</dbReference>
<dbReference type="RefSeq" id="NP_416322.1">
    <property type="nucleotide sequence ID" value="NC_000913.3"/>
</dbReference>
<dbReference type="RefSeq" id="WP_000128841.1">
    <property type="nucleotide sequence ID" value="NZ_LN832404.1"/>
</dbReference>
<dbReference type="SMR" id="P76257"/>
<dbReference type="BioGRID" id="4260341">
    <property type="interactions" value="116"/>
</dbReference>
<dbReference type="DIP" id="DIP-12786N"/>
<dbReference type="FunCoup" id="P76257">
    <property type="interactions" value="258"/>
</dbReference>
<dbReference type="IntAct" id="P76257">
    <property type="interactions" value="10"/>
</dbReference>
<dbReference type="STRING" id="511145.b1808"/>
<dbReference type="PaxDb" id="511145-b1808"/>
<dbReference type="EnsemblBacteria" id="AAC74878">
    <property type="protein sequence ID" value="AAC74878"/>
    <property type="gene ID" value="b1808"/>
</dbReference>
<dbReference type="GeneID" id="946305"/>
<dbReference type="KEGG" id="ecj:JW1797"/>
<dbReference type="KEGG" id="eco:b1808"/>
<dbReference type="KEGG" id="ecoc:C3026_10300"/>
<dbReference type="PATRIC" id="fig|511145.12.peg.1884"/>
<dbReference type="EchoBASE" id="EB3286"/>
<dbReference type="eggNOG" id="COG1199">
    <property type="taxonomic scope" value="Bacteria"/>
</dbReference>
<dbReference type="HOGENOM" id="CLU_012117_2_0_6"/>
<dbReference type="InParanoid" id="P76257"/>
<dbReference type="OMA" id="INIAREC"/>
<dbReference type="OrthoDB" id="9805194at2"/>
<dbReference type="PhylomeDB" id="P76257"/>
<dbReference type="BioCyc" id="EcoCyc:G6992-MONOMER"/>
<dbReference type="PRO" id="PR:P76257"/>
<dbReference type="Proteomes" id="UP000000625">
    <property type="component" value="Chromosome"/>
</dbReference>
<dbReference type="GO" id="GO:0043139">
    <property type="term" value="F:5'-3' DNA helicase activity"/>
    <property type="evidence" value="ECO:0000314"/>
    <property type="project" value="UniProtKB"/>
</dbReference>
<dbReference type="GO" id="GO:0005524">
    <property type="term" value="F:ATP binding"/>
    <property type="evidence" value="ECO:0007669"/>
    <property type="project" value="UniProtKB-KW"/>
</dbReference>
<dbReference type="GO" id="GO:0016887">
    <property type="term" value="F:ATP hydrolysis activity"/>
    <property type="evidence" value="ECO:0007669"/>
    <property type="project" value="RHEA"/>
</dbReference>
<dbReference type="GO" id="GO:0003677">
    <property type="term" value="F:DNA binding"/>
    <property type="evidence" value="ECO:0007669"/>
    <property type="project" value="UniProtKB-KW"/>
</dbReference>
<dbReference type="GO" id="GO:0003678">
    <property type="term" value="F:DNA helicase activity"/>
    <property type="evidence" value="ECO:0000314"/>
    <property type="project" value="EcoCyc"/>
</dbReference>
<dbReference type="GO" id="GO:0004386">
    <property type="term" value="F:helicase activity"/>
    <property type="evidence" value="ECO:0000255"/>
    <property type="project" value="EcoCyc"/>
</dbReference>
<dbReference type="GO" id="GO:0051536">
    <property type="term" value="F:iron-sulfur cluster binding"/>
    <property type="evidence" value="ECO:0000255"/>
    <property type="project" value="EcoCyc"/>
</dbReference>
<dbReference type="GO" id="GO:0046872">
    <property type="term" value="F:metal ion binding"/>
    <property type="evidence" value="ECO:0007669"/>
    <property type="project" value="UniProtKB-KW"/>
</dbReference>
<dbReference type="GO" id="GO:0006281">
    <property type="term" value="P:DNA repair"/>
    <property type="evidence" value="ECO:0000314"/>
    <property type="project" value="EcoCyc"/>
</dbReference>
<dbReference type="GO" id="GO:0009432">
    <property type="term" value="P:SOS response"/>
    <property type="evidence" value="ECO:0007669"/>
    <property type="project" value="UniProtKB-KW"/>
</dbReference>
<dbReference type="FunFam" id="3.40.50.300:FF:000466">
    <property type="entry name" value="ATP-dependent DNA helicase"/>
    <property type="match status" value="1"/>
</dbReference>
<dbReference type="FunFam" id="3.40.50.300:FF:000499">
    <property type="entry name" value="ATP-dependent DNA helicase"/>
    <property type="match status" value="1"/>
</dbReference>
<dbReference type="Gene3D" id="3.40.50.300">
    <property type="entry name" value="P-loop containing nucleotide triphosphate hydrolases"/>
    <property type="match status" value="2"/>
</dbReference>
<dbReference type="InterPro" id="IPR006555">
    <property type="entry name" value="ATP-dep_Helicase_C"/>
</dbReference>
<dbReference type="InterPro" id="IPR011545">
    <property type="entry name" value="DEAD/DEAH_box_helicase_dom"/>
</dbReference>
<dbReference type="InterPro" id="IPR045028">
    <property type="entry name" value="DinG/Rad3-like"/>
</dbReference>
<dbReference type="InterPro" id="IPR014013">
    <property type="entry name" value="Helic_SF1/SF2_ATP-bd_DinG/Rad3"/>
</dbReference>
<dbReference type="InterPro" id="IPR014001">
    <property type="entry name" value="Helicase_ATP-bd"/>
</dbReference>
<dbReference type="InterPro" id="IPR027417">
    <property type="entry name" value="P-loop_NTPase"/>
</dbReference>
<dbReference type="InterPro" id="IPR010614">
    <property type="entry name" value="RAD3-like_helicase_DEAD"/>
</dbReference>
<dbReference type="PANTHER" id="PTHR11472">
    <property type="entry name" value="DNA REPAIR DEAD HELICASE RAD3/XP-D SUBFAMILY MEMBER"/>
    <property type="match status" value="1"/>
</dbReference>
<dbReference type="PANTHER" id="PTHR11472:SF34">
    <property type="entry name" value="REGULATOR OF TELOMERE ELONGATION HELICASE 1"/>
    <property type="match status" value="1"/>
</dbReference>
<dbReference type="Pfam" id="PF00270">
    <property type="entry name" value="DEAD"/>
    <property type="match status" value="1"/>
</dbReference>
<dbReference type="Pfam" id="PF06733">
    <property type="entry name" value="DEAD_2"/>
    <property type="match status" value="1"/>
</dbReference>
<dbReference type="Pfam" id="PF13307">
    <property type="entry name" value="Helicase_C_2"/>
    <property type="match status" value="1"/>
</dbReference>
<dbReference type="SMART" id="SM00487">
    <property type="entry name" value="DEXDc"/>
    <property type="match status" value="1"/>
</dbReference>
<dbReference type="SMART" id="SM00491">
    <property type="entry name" value="HELICc2"/>
    <property type="match status" value="1"/>
</dbReference>
<dbReference type="SUPFAM" id="SSF52540">
    <property type="entry name" value="P-loop containing nucleoside triphosphate hydrolases"/>
    <property type="match status" value="2"/>
</dbReference>
<dbReference type="PROSITE" id="PS51193">
    <property type="entry name" value="HELICASE_ATP_BIND_2"/>
    <property type="match status" value="1"/>
</dbReference>
<accession>P76257</accession>
<accession>O07973</accession>
<gene>
    <name type="primary">yoaA</name>
    <name type="ordered locus">b1808</name>
    <name type="ordered locus">JW1797</name>
</gene>
<evidence type="ECO:0000250" key="1">
    <source>
        <dbReference type="UniProtKB" id="P27296"/>
    </source>
</evidence>
<evidence type="ECO:0000255" key="2">
    <source>
        <dbReference type="PROSITE-ProRule" id="PRU00541"/>
    </source>
</evidence>
<evidence type="ECO:0000269" key="3">
    <source>
    </source>
</evidence>
<evidence type="ECO:0000269" key="4">
    <source>
    </source>
</evidence>
<evidence type="ECO:0000269" key="5">
    <source>
    </source>
</evidence>
<evidence type="ECO:0000269" key="6">
    <source>
    </source>
</evidence>
<evidence type="ECO:0000303" key="7">
    <source>
    </source>
</evidence>
<evidence type="ECO:0000305" key="8"/>
<evidence type="ECO:0000305" key="9">
    <source>
    </source>
</evidence>
<reference key="1">
    <citation type="journal article" date="1996" name="DNA Res.">
        <title>A 460-kb DNA sequence of the Escherichia coli K-12 genome corresponding to the 40.1-50.0 min region on the linkage map.</title>
        <authorList>
            <person name="Itoh T."/>
            <person name="Aiba H."/>
            <person name="Baba T."/>
            <person name="Fujita K."/>
            <person name="Hayashi K."/>
            <person name="Inada T."/>
            <person name="Isono K."/>
            <person name="Kasai H."/>
            <person name="Kimura S."/>
            <person name="Kitakawa M."/>
            <person name="Kitagawa M."/>
            <person name="Makino K."/>
            <person name="Miki T."/>
            <person name="Mizobuchi K."/>
            <person name="Mori H."/>
            <person name="Mori T."/>
            <person name="Motomura K."/>
            <person name="Nakade S."/>
            <person name="Nakamura Y."/>
            <person name="Nashimoto H."/>
            <person name="Nishio Y."/>
            <person name="Oshima T."/>
            <person name="Saito N."/>
            <person name="Sampei G."/>
            <person name="Seki Y."/>
            <person name="Sivasundaram S."/>
            <person name="Tagami H."/>
            <person name="Takeda J."/>
            <person name="Takemoto K."/>
            <person name="Wada C."/>
            <person name="Yamamoto Y."/>
            <person name="Horiuchi T."/>
        </authorList>
    </citation>
    <scope>NUCLEOTIDE SEQUENCE [LARGE SCALE GENOMIC DNA]</scope>
    <source>
        <strain>K12 / W3110 / ATCC 27325 / DSM 5911</strain>
    </source>
</reference>
<reference key="2">
    <citation type="journal article" date="1997" name="Science">
        <title>The complete genome sequence of Escherichia coli K-12.</title>
        <authorList>
            <person name="Blattner F.R."/>
            <person name="Plunkett G. III"/>
            <person name="Bloch C.A."/>
            <person name="Perna N.T."/>
            <person name="Burland V."/>
            <person name="Riley M."/>
            <person name="Collado-Vides J."/>
            <person name="Glasner J.D."/>
            <person name="Rode C.K."/>
            <person name="Mayhew G.F."/>
            <person name="Gregor J."/>
            <person name="Davis N.W."/>
            <person name="Kirkpatrick H.A."/>
            <person name="Goeden M.A."/>
            <person name="Rose D.J."/>
            <person name="Mau B."/>
            <person name="Shao Y."/>
        </authorList>
    </citation>
    <scope>NUCLEOTIDE SEQUENCE [LARGE SCALE GENOMIC DNA]</scope>
    <source>
        <strain>K12 / MG1655 / ATCC 47076</strain>
    </source>
</reference>
<reference key="3">
    <citation type="journal article" date="2006" name="Mol. Syst. Biol.">
        <title>Highly accurate genome sequences of Escherichia coli K-12 strains MG1655 and W3110.</title>
        <authorList>
            <person name="Hayashi K."/>
            <person name="Morooka N."/>
            <person name="Yamamoto Y."/>
            <person name="Fujita K."/>
            <person name="Isono K."/>
            <person name="Choi S."/>
            <person name="Ohtsubo E."/>
            <person name="Baba T."/>
            <person name="Wanner B.L."/>
            <person name="Mori H."/>
            <person name="Horiuchi T."/>
        </authorList>
    </citation>
    <scope>NUCLEOTIDE SEQUENCE [LARGE SCALE GENOMIC DNA]</scope>
    <source>
        <strain>K12 / W3110 / ATCC 27325 / DSM 5911</strain>
    </source>
</reference>
<reference key="4">
    <citation type="journal article" date="2015" name="PLoS Genet.">
        <title>Connecting replication and repair: YoaA, a helicase-related protein, promotes azidothymidine tolerance through association with Chi, an accessory clamp loader protein.</title>
        <authorList>
            <person name="Brown L.T."/>
            <person name="Sutera V.A. Jr."/>
            <person name="Zhou S."/>
            <person name="Weitzel C.S."/>
            <person name="Cheng Y."/>
            <person name="Lovett S.T."/>
        </authorList>
    </citation>
    <scope>FUNCTION</scope>
    <scope>INTERACTION WITH HOLC (CHI)</scope>
    <scope>DISRUPTION PHENOTYPE</scope>
    <scope>MUTAGENESIS OF LYS-51; CYS-168 AND ASP-225</scope>
    <source>
        <strain>K12 / MG1655 / ATCC 47076</strain>
    </source>
</reference>
<reference key="5">
    <citation type="journal article" date="2021" name="DNA Repair">
        <title>Alternative complexes formed by the Escherichia coli clamp loader accessory protein HolC (x) with replication protein HolD (psi) and repair protein YoaA.</title>
        <authorList>
            <person name="Sutera V.A."/>
            <person name="Weeks S.J."/>
            <person name="Dudenhausen E.E."/>
            <person name="Baggett H.B.R."/>
            <person name="Shaw M.C."/>
            <person name="Brand K.A."/>
            <person name="Glass D.J."/>
            <person name="Bloom L.B."/>
            <person name="Lovett S.T."/>
        </authorList>
    </citation>
    <scope>FUNCTION</scope>
    <scope>INTERACTION WITH HOLC (CHI)</scope>
</reference>
<reference key="6">
    <citation type="journal article" date="2021" name="J. Bacteriol.">
        <title>Genetic Analysis of DinG Family Helicase YoaA and Its Interaction with Replication Clamp Loader Protein HolC in Escherichia coli.</title>
        <authorList>
            <person name="Sutera V.A."/>
            <person name="Sass T.H."/>
            <person name="Leonard S.E."/>
            <person name="Wu L."/>
            <person name="Glass D.J."/>
            <person name="Giordano G.G."/>
            <person name="Zur Y."/>
            <person name="Lovett S.T."/>
        </authorList>
    </citation>
    <scope>FUNCTION</scope>
    <scope>INTERACTION WITH HOLC (CHI)</scope>
    <scope>INDUCTION</scope>
    <scope>DISRUPTION PHENOTYPE</scope>
    <scope>MUTAGENESIS OF LYS-51; PRO-615; 619-ARG--ARG-636; ARG-619; THR-620; PHE-629 AND 632-ILE--ARG-636</scope>
    <source>
        <strain>K12 / MG1655 / ATCC 47076</strain>
    </source>
</reference>
<reference key="7">
    <citation type="journal article" date="2023" name="J. Biol. Chem.">
        <title>Characterization of the Escherichia coli XPD/Rad3 iron-sulfur helicase YoaA in complex with the DNA polymerase III clamp loader subunit chi (chi).</title>
        <authorList>
            <person name="Weeks-Pollenz S.J."/>
            <person name="Ali Y."/>
            <person name="Morris L.A."/>
            <person name="Sutera V.A."/>
            <person name="Dudenhausen E.E."/>
            <person name="Hibnick M."/>
            <person name="Lovett S.T."/>
            <person name="Bloom L.B."/>
        </authorList>
    </citation>
    <scope>FUNCTION AS A 5'-3' HELICASE</scope>
    <scope>FUNCTION AS AN ATPASE</scope>
    <scope>FUNCTION IN DAMAGED DNA UNWINDING</scope>
    <scope>PROBABLE IRON-SULFUR COFACTOR</scope>
    <scope>MG(2+) COFACTOR</scope>
    <scope>ACTIVITY REGULATION</scope>
    <scope>INTERACTION WITH HOLC (CHI)</scope>
    <scope>DNA-BINDING</scope>
    <scope>MUTAGENESIS OF LYS-51</scope>
</reference>